<evidence type="ECO:0000250" key="1"/>
<evidence type="ECO:0000305" key="2"/>
<name>SOMA_ONCMA</name>
<protein>
    <recommendedName>
        <fullName>Somatotropin</fullName>
    </recommendedName>
    <alternativeName>
        <fullName>Growth hormone</fullName>
    </alternativeName>
</protein>
<reference key="1">
    <citation type="submission" date="1991-08" db="EMBL/GenBank/DDBJ databases">
        <title>cDNA cloning and primary structure of masu salmon (Oncorhynchus masou) growth hormone.</title>
        <authorList>
            <person name="Shoji K."/>
            <person name="Watahiki M."/>
            <person name="Hirano H."/>
            <person name="Yoneda Y."/>
        </authorList>
    </citation>
    <scope>NUCLEOTIDE SEQUENCE [MRNA]</scope>
    <source>
        <tissue>Pituitary</tissue>
    </source>
</reference>
<proteinExistence type="evidence at transcript level"/>
<accession>Q9DGG5</accession>
<dbReference type="EMBL" id="X59762">
    <property type="protein sequence ID" value="CAA42431.1"/>
    <property type="molecule type" value="mRNA"/>
</dbReference>
<dbReference type="SMR" id="Q9DGG5"/>
<dbReference type="GO" id="GO:0005615">
    <property type="term" value="C:extracellular space"/>
    <property type="evidence" value="ECO:0007669"/>
    <property type="project" value="InterPro"/>
</dbReference>
<dbReference type="GO" id="GO:0070186">
    <property type="term" value="F:growth hormone activity"/>
    <property type="evidence" value="ECO:0007669"/>
    <property type="project" value="TreeGrafter"/>
</dbReference>
<dbReference type="GO" id="GO:0005131">
    <property type="term" value="F:growth hormone receptor binding"/>
    <property type="evidence" value="ECO:0007669"/>
    <property type="project" value="InterPro"/>
</dbReference>
<dbReference type="GO" id="GO:0046872">
    <property type="term" value="F:metal ion binding"/>
    <property type="evidence" value="ECO:0007669"/>
    <property type="project" value="UniProtKB-KW"/>
</dbReference>
<dbReference type="GO" id="GO:0048513">
    <property type="term" value="P:animal organ development"/>
    <property type="evidence" value="ECO:0007669"/>
    <property type="project" value="TreeGrafter"/>
</dbReference>
<dbReference type="GO" id="GO:0055074">
    <property type="term" value="P:calcium ion homeostasis"/>
    <property type="evidence" value="ECO:0000250"/>
    <property type="project" value="AgBase"/>
</dbReference>
<dbReference type="GO" id="GO:0060396">
    <property type="term" value="P:growth hormone receptor signaling pathway"/>
    <property type="evidence" value="ECO:0007669"/>
    <property type="project" value="TreeGrafter"/>
</dbReference>
<dbReference type="GO" id="GO:0042538">
    <property type="term" value="P:hyperosmotic salinity response"/>
    <property type="evidence" value="ECO:0000250"/>
    <property type="project" value="AgBase"/>
</dbReference>
<dbReference type="GO" id="GO:0010960">
    <property type="term" value="P:magnesium ion homeostasis"/>
    <property type="evidence" value="ECO:0000250"/>
    <property type="project" value="AgBase"/>
</dbReference>
<dbReference type="GO" id="GO:0045927">
    <property type="term" value="P:positive regulation of growth"/>
    <property type="evidence" value="ECO:0007669"/>
    <property type="project" value="TreeGrafter"/>
</dbReference>
<dbReference type="GO" id="GO:0050766">
    <property type="term" value="P:positive regulation of phagocytosis"/>
    <property type="evidence" value="ECO:0000250"/>
    <property type="project" value="AgBase"/>
</dbReference>
<dbReference type="GO" id="GO:0046427">
    <property type="term" value="P:positive regulation of receptor signaling pathway via JAK-STAT"/>
    <property type="evidence" value="ECO:0007669"/>
    <property type="project" value="TreeGrafter"/>
</dbReference>
<dbReference type="GO" id="GO:0032930">
    <property type="term" value="P:positive regulation of superoxide anion generation"/>
    <property type="evidence" value="ECO:0000250"/>
    <property type="project" value="AgBase"/>
</dbReference>
<dbReference type="GO" id="GO:0002637">
    <property type="term" value="P:regulation of immunoglobulin production"/>
    <property type="evidence" value="ECO:0000250"/>
    <property type="project" value="AgBase"/>
</dbReference>
<dbReference type="GO" id="GO:0031667">
    <property type="term" value="P:response to nutrient levels"/>
    <property type="evidence" value="ECO:0007669"/>
    <property type="project" value="TreeGrafter"/>
</dbReference>
<dbReference type="GO" id="GO:0055078">
    <property type="term" value="P:sodium ion homeostasis"/>
    <property type="evidence" value="ECO:0000250"/>
    <property type="project" value="AgBase"/>
</dbReference>
<dbReference type="CDD" id="cd10285">
    <property type="entry name" value="somatotropin_like"/>
    <property type="match status" value="1"/>
</dbReference>
<dbReference type="FunFam" id="1.20.1250.10:FF:000009">
    <property type="entry name" value="Growth hormone"/>
    <property type="match status" value="1"/>
</dbReference>
<dbReference type="Gene3D" id="1.20.1250.10">
    <property type="match status" value="1"/>
</dbReference>
<dbReference type="InterPro" id="IPR009079">
    <property type="entry name" value="4_helix_cytokine-like_core"/>
</dbReference>
<dbReference type="InterPro" id="IPR034975">
    <property type="entry name" value="Somatotropin"/>
</dbReference>
<dbReference type="InterPro" id="IPR001400">
    <property type="entry name" value="Somatotropin/Prolactin"/>
</dbReference>
<dbReference type="InterPro" id="IPR018116">
    <property type="entry name" value="Somatotropin_CS"/>
</dbReference>
<dbReference type="PANTHER" id="PTHR11417:SF2">
    <property type="entry name" value="SOMATOTROPIN"/>
    <property type="match status" value="1"/>
</dbReference>
<dbReference type="PANTHER" id="PTHR11417">
    <property type="entry name" value="SOMATOTROPIN,PROLACTIN"/>
    <property type="match status" value="1"/>
</dbReference>
<dbReference type="Pfam" id="PF00103">
    <property type="entry name" value="Hormone_1"/>
    <property type="match status" value="1"/>
</dbReference>
<dbReference type="PRINTS" id="PR00836">
    <property type="entry name" value="SOMATOTROPIN"/>
</dbReference>
<dbReference type="SUPFAM" id="SSF47266">
    <property type="entry name" value="4-helical cytokines"/>
    <property type="match status" value="1"/>
</dbReference>
<dbReference type="PROSITE" id="PS00266">
    <property type="entry name" value="SOMATOTROPIN_1"/>
    <property type="match status" value="1"/>
</dbReference>
<dbReference type="PROSITE" id="PS00338">
    <property type="entry name" value="SOMATOTROPIN_2"/>
    <property type="match status" value="1"/>
</dbReference>
<gene>
    <name type="primary">gh</name>
</gene>
<feature type="signal peptide" evidence="1">
    <location>
        <begin position="1"/>
        <end position="22"/>
    </location>
</feature>
<feature type="chain" id="PRO_0000033035" description="Somatotropin">
    <location>
        <begin position="23"/>
        <end position="210"/>
    </location>
</feature>
<feature type="binding site" evidence="1">
    <location>
        <position position="38"/>
    </location>
    <ligand>
        <name>Zn(2+)</name>
        <dbReference type="ChEBI" id="CHEBI:29105"/>
    </ligand>
</feature>
<feature type="binding site" evidence="1">
    <location>
        <position position="192"/>
    </location>
    <ligand>
        <name>Zn(2+)</name>
        <dbReference type="ChEBI" id="CHEBI:29105"/>
    </ligand>
</feature>
<feature type="disulfide bond" evidence="1">
    <location>
        <begin position="71"/>
        <end position="183"/>
    </location>
</feature>
<feature type="disulfide bond" evidence="1">
    <location>
        <begin position="200"/>
        <end position="208"/>
    </location>
</feature>
<sequence>MGQVFLLMPVLLVSCFLSHGAAIENQRLFNIAVSRVQHLHLLAQKMFNDFDGTLLPDERRQLNKIFLLDFCNSDSIVSPIDKHETQKSSVLKLLHISFRLIESWEYPSQTLIISNSLMVRNANQISEKLSDLKVGINLLITGNQDGVLSLDDNDSQQLPPYGNYYQNLGGDGNVRRNYELLACFKKDMHKVETYLTVAKCRKSLEANCTL</sequence>
<keyword id="KW-1015">Disulfide bond</keyword>
<keyword id="KW-0372">Hormone</keyword>
<keyword id="KW-0479">Metal-binding</keyword>
<keyword id="KW-0964">Secreted</keyword>
<keyword id="KW-0732">Signal</keyword>
<keyword id="KW-0862">Zinc</keyword>
<comment type="function">
    <text>Growth hormone plays an important role in growth control and is involved in the regulation of several anabolic processes. Implicated as an osmoregulatory substance important for seawater adaptation.</text>
</comment>
<comment type="subcellular location">
    <subcellularLocation>
        <location>Secreted</location>
    </subcellularLocation>
</comment>
<comment type="similarity">
    <text evidence="2">Belongs to the somatotropin/prolactin family.</text>
</comment>
<organism>
    <name type="scientific">Oncorhynchus masou</name>
    <name type="common">Cherry salmon</name>
    <name type="synonym">Masu salmon</name>
    <dbReference type="NCBI Taxonomy" id="8020"/>
    <lineage>
        <taxon>Eukaryota</taxon>
        <taxon>Metazoa</taxon>
        <taxon>Chordata</taxon>
        <taxon>Craniata</taxon>
        <taxon>Vertebrata</taxon>
        <taxon>Euteleostomi</taxon>
        <taxon>Actinopterygii</taxon>
        <taxon>Neopterygii</taxon>
        <taxon>Teleostei</taxon>
        <taxon>Protacanthopterygii</taxon>
        <taxon>Salmoniformes</taxon>
        <taxon>Salmonidae</taxon>
        <taxon>Salmoninae</taxon>
        <taxon>Oncorhynchus</taxon>
    </lineage>
</organism>